<accession>I0J0E7</accession>
<gene>
    <name evidence="5" type="primary">NMCP1</name>
</gene>
<sequence>MLTPQRSAWSLKSKVSSEKPRSKGKGITKNLDSAATPFPPLGLLNGGDLDRGGEDMEAWKRFKDEGLLDESICYKKDRESLASRIIELEKDLHEYQYNMGLLLIEKKEWSSHFEEMKMRLAEAEEILKREQAAHIIALTESEKREDNLRKALGVEKQCVTDLEKALREMRSEIAEVKYTAEKKMTEAFALEASIEEKRLDTERKLHSADAKLAEASRKSSEINRKLEDVEDRERKVQRELNSINSERKALEKDISEQKEHLREWEKKLQDGQNRLLDGQRHINEREERINEAEGGLKKKEEELEEAKRSIEGTRNTLKRKEEDLDVRLRSLVSKEKEIELKMKNLQKKEKDLHEIAEKLDHREREEIQKLLDEHRATLDTKKREFELELESKRKSVDEELKSKFAAVNKAEKEVNRKQGLISEGEKELESKMDKIKIKEKDLETKSKALKKWEESLKSDEKKLVAEKDQIMKDTHELKVSINELESLRDALNAEQHQIAEEREKLEISKEEREQYIQKQSELKQEIEKYRNMQEELSKGIESLREEREKFEKEWESLDEKKITLQRETKKIHEEKEKLEKWHHKDQERLRNEEANAKADIERQLEDIKLQKEAFENTMKHERLMAQEEVARRLADVTRELELRKHDLEMNMQKKQEEIERKLQGKEREFETRKEAELSRITSLINLNNSKLQKLRIEQDRLDREKEEVELQKKKLQEDQSEIQRDVDTLRQLSKNLKNQRAEFIKEKECFLAAAERCKTCQNCGVSISELEMVGIIQSSAEIENADIVLPSLTDDHIEQHMKNKGSHVTSPQTGSRVFGSGFLQKCTKIFKFSPGKNAETSATTTPLVFGEELDIAASEDAAANDNNPAADVERVTVNPSLVFGEQLDTAASEDAAANDNNPAADVERVTVNPPPLAPVATEQNETEESSLPPENDSPPKQRGGRQSTRRGRGGKTVRRTRTMEAVVDDAKAILGDTLIVEEAKESSQQNDEQSQGASVHTGGTSNTRQKRRRAPASEMTNSEHDVEESESQSQSISIGRGRRKKRQTSAASEVQAPVVERRYNLRHSTVAKNSVAATLAVSDQAKVQTKASHQASHDNNQISMGDDPALEGSHKVTHTVQKTTTASVMEVSSKPAMEETHEENIVVRSVEISEMSASEEAEGEVQGVPPIAEEPATPSSGSSTSGDIGNDDDMDDDDEEERHNASIGKKLWNFFTT</sequence>
<reference key="1">
    <citation type="journal article" date="2013" name="J. Exp. Bot.">
        <title>Lamin-like analogues in plants: the characterization of NMCP1 in Allium cepa.</title>
        <authorList>
            <person name="Ciska M."/>
            <person name="Masuda K."/>
            <person name="Moreno Diaz de la Espina S."/>
        </authorList>
    </citation>
    <scope>NUCLEOTIDE SEQUENCE [MRNA]</scope>
    <scope>FUNCTION</scope>
    <scope>SUBCELLULAR LOCATION</scope>
</reference>
<dbReference type="EMBL" id="AB673103">
    <property type="protein sequence ID" value="BAM10996.1"/>
    <property type="molecule type" value="mRNA"/>
</dbReference>
<dbReference type="SMR" id="I0J0E7"/>
<dbReference type="GO" id="GO:0005652">
    <property type="term" value="C:nuclear lamina"/>
    <property type="evidence" value="ECO:0000314"/>
    <property type="project" value="UniProtKB"/>
</dbReference>
<dbReference type="GO" id="GO:0016363">
    <property type="term" value="C:nuclear matrix"/>
    <property type="evidence" value="ECO:0000314"/>
    <property type="project" value="UniProtKB"/>
</dbReference>
<dbReference type="GO" id="GO:0043578">
    <property type="term" value="P:nuclear matrix organization"/>
    <property type="evidence" value="ECO:0000315"/>
    <property type="project" value="UniProtKB"/>
</dbReference>
<dbReference type="InterPro" id="IPR040418">
    <property type="entry name" value="CRWN"/>
</dbReference>
<dbReference type="PANTHER" id="PTHR31908:SF11">
    <property type="entry name" value="PROTEIN CROWDED NUCLEI 1"/>
    <property type="match status" value="1"/>
</dbReference>
<dbReference type="PANTHER" id="PTHR31908">
    <property type="entry name" value="PROTEIN CROWDED NUCLEI 4"/>
    <property type="match status" value="1"/>
</dbReference>
<comment type="function">
    <text evidence="1 7">Architectural component of nuclear structure that plays different roles in controlling nuclear size and morphology (By similarity). Involved in the organization of multimeric complexes in the peripheral nucleoskeleton (Probable).</text>
</comment>
<comment type="subcellular location">
    <subcellularLocation>
        <location evidence="4">Nucleus matrix</location>
    </subcellularLocation>
    <subcellularLocation>
        <location evidence="4">Nucleus lamina</location>
    </subcellularLocation>
    <text evidence="4">Localizes at the nuclear periphery and is associated to the nucleoskeleton.</text>
</comment>
<comment type="similarity">
    <text evidence="6">Belongs to the CRWN family.</text>
</comment>
<keyword id="KW-0175">Coiled coil</keyword>
<keyword id="KW-0539">Nucleus</keyword>
<organism>
    <name type="scientific">Allium cepa</name>
    <name type="common">Onion</name>
    <dbReference type="NCBI Taxonomy" id="4679"/>
    <lineage>
        <taxon>Eukaryota</taxon>
        <taxon>Viridiplantae</taxon>
        <taxon>Streptophyta</taxon>
        <taxon>Embryophyta</taxon>
        <taxon>Tracheophyta</taxon>
        <taxon>Spermatophyta</taxon>
        <taxon>Magnoliopsida</taxon>
        <taxon>Liliopsida</taxon>
        <taxon>Asparagales</taxon>
        <taxon>Amaryllidaceae</taxon>
        <taxon>Allioideae</taxon>
        <taxon>Allieae</taxon>
        <taxon>Allium</taxon>
    </lineage>
</organism>
<name>NMCP1_ALLCE</name>
<protein>
    <recommendedName>
        <fullName evidence="5">Nuclear matrix constituent protein 1</fullName>
        <shortName evidence="5">AcNMCP1</shortName>
    </recommendedName>
</protein>
<proteinExistence type="evidence at transcript level"/>
<evidence type="ECO:0000250" key="1">
    <source>
        <dbReference type="UniProtKB" id="Q0JJ05"/>
    </source>
</evidence>
<evidence type="ECO:0000255" key="2"/>
<evidence type="ECO:0000256" key="3">
    <source>
        <dbReference type="SAM" id="MobiDB-lite"/>
    </source>
</evidence>
<evidence type="ECO:0000269" key="4">
    <source>
    </source>
</evidence>
<evidence type="ECO:0000303" key="5">
    <source>
    </source>
</evidence>
<evidence type="ECO:0000305" key="6"/>
<evidence type="ECO:0000305" key="7">
    <source>
    </source>
</evidence>
<feature type="chain" id="PRO_0000452402" description="Nuclear matrix constituent protein 1">
    <location>
        <begin position="1"/>
        <end position="1217"/>
    </location>
</feature>
<feature type="region of interest" description="Disordered" evidence="3">
    <location>
        <begin position="1"/>
        <end position="45"/>
    </location>
</feature>
<feature type="region of interest" description="Disordered" evidence="3">
    <location>
        <begin position="892"/>
        <end position="969"/>
    </location>
</feature>
<feature type="region of interest" description="Disordered" evidence="3">
    <location>
        <begin position="981"/>
        <end position="1057"/>
    </location>
</feature>
<feature type="region of interest" description="Disordered" evidence="3">
    <location>
        <begin position="1087"/>
        <end position="1117"/>
    </location>
</feature>
<feature type="region of interest" description="Disordered" evidence="3">
    <location>
        <begin position="1152"/>
        <end position="1217"/>
    </location>
</feature>
<feature type="coiled-coil region" evidence="2">
    <location>
        <begin position="159"/>
        <end position="746"/>
    </location>
</feature>
<feature type="compositionally biased region" description="Polar residues" evidence="3">
    <location>
        <begin position="1"/>
        <end position="14"/>
    </location>
</feature>
<feature type="compositionally biased region" description="Low complexity" evidence="3">
    <location>
        <begin position="892"/>
        <end position="904"/>
    </location>
</feature>
<feature type="compositionally biased region" description="Basic residues" evidence="3">
    <location>
        <begin position="947"/>
        <end position="960"/>
    </location>
</feature>
<feature type="compositionally biased region" description="Polar residues" evidence="3">
    <location>
        <begin position="986"/>
        <end position="1007"/>
    </location>
</feature>
<feature type="compositionally biased region" description="Polar residues" evidence="3">
    <location>
        <begin position="1087"/>
        <end position="1103"/>
    </location>
</feature>
<feature type="compositionally biased region" description="Low complexity" evidence="3">
    <location>
        <begin position="1173"/>
        <end position="1186"/>
    </location>
</feature>
<feature type="compositionally biased region" description="Acidic residues" evidence="3">
    <location>
        <begin position="1189"/>
        <end position="1200"/>
    </location>
</feature>